<reference key="1">
    <citation type="journal article" date="2009" name="Nature">
        <title>Evolution of pathogenicity and sexual reproduction in eight Candida genomes.</title>
        <authorList>
            <person name="Butler G."/>
            <person name="Rasmussen M.D."/>
            <person name="Lin M.F."/>
            <person name="Santos M.A.S."/>
            <person name="Sakthikumar S."/>
            <person name="Munro C.A."/>
            <person name="Rheinbay E."/>
            <person name="Grabherr M."/>
            <person name="Forche A."/>
            <person name="Reedy J.L."/>
            <person name="Agrafioti I."/>
            <person name="Arnaud M.B."/>
            <person name="Bates S."/>
            <person name="Brown A.J.P."/>
            <person name="Brunke S."/>
            <person name="Costanzo M.C."/>
            <person name="Fitzpatrick D.A."/>
            <person name="de Groot P.W.J."/>
            <person name="Harris D."/>
            <person name="Hoyer L.L."/>
            <person name="Hube B."/>
            <person name="Klis F.M."/>
            <person name="Kodira C."/>
            <person name="Lennard N."/>
            <person name="Logue M.E."/>
            <person name="Martin R."/>
            <person name="Neiman A.M."/>
            <person name="Nikolaou E."/>
            <person name="Quail M.A."/>
            <person name="Quinn J."/>
            <person name="Santos M.C."/>
            <person name="Schmitzberger F.F."/>
            <person name="Sherlock G."/>
            <person name="Shah P."/>
            <person name="Silverstein K.A.T."/>
            <person name="Skrzypek M.S."/>
            <person name="Soll D."/>
            <person name="Staggs R."/>
            <person name="Stansfield I."/>
            <person name="Stumpf M.P.H."/>
            <person name="Sudbery P.E."/>
            <person name="Srikantha T."/>
            <person name="Zeng Q."/>
            <person name="Berman J."/>
            <person name="Berriman M."/>
            <person name="Heitman J."/>
            <person name="Gow N.A.R."/>
            <person name="Lorenz M.C."/>
            <person name="Birren B.W."/>
            <person name="Kellis M."/>
            <person name="Cuomo C.A."/>
        </authorList>
    </citation>
    <scope>NUCLEOTIDE SEQUENCE [LARGE SCALE GENOMIC DNA]</scope>
    <source>
        <strain>ATCC 11503 / BCRC 21390 / CBS 2605 / JCM 1781 / NBRC 1676 / NRRL YB-4239</strain>
    </source>
</reference>
<proteinExistence type="inferred from homology"/>
<feature type="signal peptide" evidence="2">
    <location>
        <begin position="1"/>
        <end position="19"/>
    </location>
</feature>
<feature type="chain" id="PRO_0000399081" description="Increased recombination centers protein 22">
    <location>
        <begin position="20"/>
        <end position="239"/>
    </location>
</feature>
<feature type="topological domain" description="Lumenal" evidence="2">
    <location>
        <begin position="20"/>
        <end position="160"/>
    </location>
</feature>
<feature type="transmembrane region" description="Helical" evidence="2">
    <location>
        <begin position="161"/>
        <end position="181"/>
    </location>
</feature>
<feature type="topological domain" description="Cytoplasmic" evidence="2">
    <location>
        <begin position="182"/>
        <end position="239"/>
    </location>
</feature>
<name>IRC22_LODEL</name>
<gene>
    <name type="primary">IRC22</name>
    <name type="ORF">LELG_02539</name>
</gene>
<keyword id="KW-0256">Endoplasmic reticulum</keyword>
<keyword id="KW-0472">Membrane</keyword>
<keyword id="KW-1185">Reference proteome</keyword>
<keyword id="KW-0732">Signal</keyword>
<keyword id="KW-0812">Transmembrane</keyword>
<keyword id="KW-1133">Transmembrane helix</keyword>
<organism>
    <name type="scientific">Lodderomyces elongisporus (strain ATCC 11503 / CBS 2605 / JCM 1781 / NBRC 1676 / NRRL YB-4239)</name>
    <name type="common">Yeast</name>
    <name type="synonym">Saccharomyces elongisporus</name>
    <dbReference type="NCBI Taxonomy" id="379508"/>
    <lineage>
        <taxon>Eukaryota</taxon>
        <taxon>Fungi</taxon>
        <taxon>Dikarya</taxon>
        <taxon>Ascomycota</taxon>
        <taxon>Saccharomycotina</taxon>
        <taxon>Pichiomycetes</taxon>
        <taxon>Debaryomycetaceae</taxon>
        <taxon>Candida/Lodderomyces clade</taxon>
        <taxon>Lodderomyces</taxon>
    </lineage>
</organism>
<evidence type="ECO:0000250" key="1"/>
<evidence type="ECO:0000255" key="2"/>
<evidence type="ECO:0000305" key="3"/>
<accession>A5DYV2</accession>
<dbReference type="EMBL" id="CH981526">
    <property type="protein sequence ID" value="EDK44360.1"/>
    <property type="molecule type" value="Genomic_DNA"/>
</dbReference>
<dbReference type="RefSeq" id="XP_001525981.1">
    <property type="nucleotide sequence ID" value="XM_001525931.1"/>
</dbReference>
<dbReference type="SMR" id="A5DYV2"/>
<dbReference type="FunCoup" id="A5DYV2">
    <property type="interactions" value="23"/>
</dbReference>
<dbReference type="STRING" id="379508.A5DYV2"/>
<dbReference type="GeneID" id="5232897"/>
<dbReference type="KEGG" id="lel:PVL30_003375"/>
<dbReference type="VEuPathDB" id="FungiDB:LELG_02539"/>
<dbReference type="eggNOG" id="ENOG502S7BF">
    <property type="taxonomic scope" value="Eukaryota"/>
</dbReference>
<dbReference type="HOGENOM" id="CLU_078554_0_0_1"/>
<dbReference type="InParanoid" id="A5DYV2"/>
<dbReference type="OMA" id="WLPETYK"/>
<dbReference type="OrthoDB" id="1926781at2759"/>
<dbReference type="Proteomes" id="UP000001996">
    <property type="component" value="Unassembled WGS sequence"/>
</dbReference>
<dbReference type="GO" id="GO:0005789">
    <property type="term" value="C:endoplasmic reticulum membrane"/>
    <property type="evidence" value="ECO:0007669"/>
    <property type="project" value="UniProtKB-SubCell"/>
</dbReference>
<dbReference type="InterPro" id="IPR005595">
    <property type="entry name" value="TRAP_alpha"/>
</dbReference>
<dbReference type="PANTHER" id="PTHR12924:SF0">
    <property type="entry name" value="TRANSLOCON-ASSOCIATED PROTEIN SUBUNIT ALPHA"/>
    <property type="match status" value="1"/>
</dbReference>
<dbReference type="PANTHER" id="PTHR12924">
    <property type="entry name" value="TRANSLOCON-ASSOCIATED PROTEIN, ALPHA SUBUNIT"/>
    <property type="match status" value="1"/>
</dbReference>
<dbReference type="Pfam" id="PF03896">
    <property type="entry name" value="TRAP_alpha"/>
    <property type="match status" value="1"/>
</dbReference>
<sequence length="239" mass="25949">MKVFTLLAAAAASIATVVGYETAEKQFVDILIEYQIVQTPEVTKNDVAQWTNGDEVTLKYNIVNNEEKEVTVIGVTGQFTNPVTNEIVTNLTQGRVGPLSIPPGQSASFEQNIGIDVIPNNYELIPQVFFAHDELIKVIPCRGQLATVADKSISFFDPRLIFLELVLLASFAGIAYLAYQIWGKKYIQGTAPVKVKKTTAVTSVPAGTGVSTTTTGASGYDVNWIPEGHLKQKKTKKVA</sequence>
<comment type="function">
    <text>Is probably involved in a pathway contributing to genomic integrity.</text>
</comment>
<comment type="subcellular location">
    <subcellularLocation>
        <location evidence="1">Endoplasmic reticulum membrane</location>
        <topology evidence="1">Single-pass type I membrane protein</topology>
    </subcellularLocation>
</comment>
<comment type="similarity">
    <text evidence="3">Belongs to the IRC22 family.</text>
</comment>
<protein>
    <recommendedName>
        <fullName>Increased recombination centers protein 22</fullName>
    </recommendedName>
</protein>